<protein>
    <recommendedName>
        <fullName evidence="1">Uridylate kinase</fullName>
        <shortName evidence="1">UK</shortName>
        <ecNumber evidence="1">2.7.4.22</ecNumber>
    </recommendedName>
    <alternativeName>
        <fullName evidence="1">Uridine monophosphate kinase</fullName>
        <shortName evidence="1">UMP kinase</shortName>
        <shortName evidence="1">UMPK</shortName>
    </alternativeName>
</protein>
<keyword id="KW-0067">ATP-binding</keyword>
<keyword id="KW-0963">Cytoplasm</keyword>
<keyword id="KW-0418">Kinase</keyword>
<keyword id="KW-0547">Nucleotide-binding</keyword>
<keyword id="KW-0665">Pyrimidine biosynthesis</keyword>
<keyword id="KW-1185">Reference proteome</keyword>
<keyword id="KW-0808">Transferase</keyword>
<name>PYRH_ALBFT</name>
<evidence type="ECO:0000255" key="1">
    <source>
        <dbReference type="HAMAP-Rule" id="MF_01220"/>
    </source>
</evidence>
<feature type="chain" id="PRO_0000323937" description="Uridylate kinase">
    <location>
        <begin position="1"/>
        <end position="240"/>
    </location>
</feature>
<feature type="binding site" evidence="1">
    <location>
        <begin position="14"/>
        <end position="17"/>
    </location>
    <ligand>
        <name>ATP</name>
        <dbReference type="ChEBI" id="CHEBI:30616"/>
    </ligand>
</feature>
<feature type="binding site" evidence="1">
    <location>
        <position position="56"/>
    </location>
    <ligand>
        <name>UMP</name>
        <dbReference type="ChEBI" id="CHEBI:57865"/>
    </ligand>
</feature>
<feature type="binding site" evidence="1">
    <location>
        <position position="57"/>
    </location>
    <ligand>
        <name>ATP</name>
        <dbReference type="ChEBI" id="CHEBI:30616"/>
    </ligand>
</feature>
<feature type="binding site" evidence="1">
    <location>
        <position position="61"/>
    </location>
    <ligand>
        <name>ATP</name>
        <dbReference type="ChEBI" id="CHEBI:30616"/>
    </ligand>
</feature>
<feature type="binding site" evidence="1">
    <location>
        <position position="76"/>
    </location>
    <ligand>
        <name>UMP</name>
        <dbReference type="ChEBI" id="CHEBI:57865"/>
    </ligand>
</feature>
<feature type="binding site" evidence="1">
    <location>
        <begin position="137"/>
        <end position="144"/>
    </location>
    <ligand>
        <name>UMP</name>
        <dbReference type="ChEBI" id="CHEBI:57865"/>
    </ligand>
</feature>
<feature type="binding site" evidence="1">
    <location>
        <position position="164"/>
    </location>
    <ligand>
        <name>ATP</name>
        <dbReference type="ChEBI" id="CHEBI:30616"/>
    </ligand>
</feature>
<feature type="binding site" evidence="1">
    <location>
        <position position="170"/>
    </location>
    <ligand>
        <name>ATP</name>
        <dbReference type="ChEBI" id="CHEBI:30616"/>
    </ligand>
</feature>
<feature type="binding site" evidence="1">
    <location>
        <position position="173"/>
    </location>
    <ligand>
        <name>ATP</name>
        <dbReference type="ChEBI" id="CHEBI:30616"/>
    </ligand>
</feature>
<dbReference type="EC" id="2.7.4.22" evidence="1"/>
<dbReference type="EMBL" id="CP000267">
    <property type="protein sequence ID" value="ABD69716.1"/>
    <property type="molecule type" value="Genomic_DNA"/>
</dbReference>
<dbReference type="RefSeq" id="WP_011464284.1">
    <property type="nucleotide sequence ID" value="NC_007908.1"/>
</dbReference>
<dbReference type="SMR" id="Q21WY7"/>
<dbReference type="STRING" id="338969.Rfer_1991"/>
<dbReference type="KEGG" id="rfr:Rfer_1991"/>
<dbReference type="eggNOG" id="COG0528">
    <property type="taxonomic scope" value="Bacteria"/>
</dbReference>
<dbReference type="HOGENOM" id="CLU_033861_0_0_4"/>
<dbReference type="OrthoDB" id="9807458at2"/>
<dbReference type="UniPathway" id="UPA00159">
    <property type="reaction ID" value="UER00275"/>
</dbReference>
<dbReference type="Proteomes" id="UP000008332">
    <property type="component" value="Chromosome"/>
</dbReference>
<dbReference type="GO" id="GO:0005829">
    <property type="term" value="C:cytosol"/>
    <property type="evidence" value="ECO:0007669"/>
    <property type="project" value="TreeGrafter"/>
</dbReference>
<dbReference type="GO" id="GO:0005524">
    <property type="term" value="F:ATP binding"/>
    <property type="evidence" value="ECO:0007669"/>
    <property type="project" value="UniProtKB-KW"/>
</dbReference>
<dbReference type="GO" id="GO:0033862">
    <property type="term" value="F:UMP kinase activity"/>
    <property type="evidence" value="ECO:0007669"/>
    <property type="project" value="UniProtKB-EC"/>
</dbReference>
<dbReference type="GO" id="GO:0044210">
    <property type="term" value="P:'de novo' CTP biosynthetic process"/>
    <property type="evidence" value="ECO:0007669"/>
    <property type="project" value="UniProtKB-UniRule"/>
</dbReference>
<dbReference type="GO" id="GO:0006225">
    <property type="term" value="P:UDP biosynthetic process"/>
    <property type="evidence" value="ECO:0007669"/>
    <property type="project" value="TreeGrafter"/>
</dbReference>
<dbReference type="CDD" id="cd04254">
    <property type="entry name" value="AAK_UMPK-PyrH-Ec"/>
    <property type="match status" value="1"/>
</dbReference>
<dbReference type="FunFam" id="3.40.1160.10:FF:000001">
    <property type="entry name" value="Uridylate kinase"/>
    <property type="match status" value="1"/>
</dbReference>
<dbReference type="Gene3D" id="3.40.1160.10">
    <property type="entry name" value="Acetylglutamate kinase-like"/>
    <property type="match status" value="1"/>
</dbReference>
<dbReference type="HAMAP" id="MF_01220_B">
    <property type="entry name" value="PyrH_B"/>
    <property type="match status" value="1"/>
</dbReference>
<dbReference type="InterPro" id="IPR036393">
    <property type="entry name" value="AceGlu_kinase-like_sf"/>
</dbReference>
<dbReference type="InterPro" id="IPR001048">
    <property type="entry name" value="Asp/Glu/Uridylate_kinase"/>
</dbReference>
<dbReference type="InterPro" id="IPR011817">
    <property type="entry name" value="Uridylate_kinase"/>
</dbReference>
<dbReference type="InterPro" id="IPR015963">
    <property type="entry name" value="Uridylate_kinase_bac"/>
</dbReference>
<dbReference type="NCBIfam" id="TIGR02075">
    <property type="entry name" value="pyrH_bact"/>
    <property type="match status" value="1"/>
</dbReference>
<dbReference type="PANTHER" id="PTHR42833">
    <property type="entry name" value="URIDYLATE KINASE"/>
    <property type="match status" value="1"/>
</dbReference>
<dbReference type="PANTHER" id="PTHR42833:SF4">
    <property type="entry name" value="URIDYLATE KINASE PUMPKIN, CHLOROPLASTIC"/>
    <property type="match status" value="1"/>
</dbReference>
<dbReference type="Pfam" id="PF00696">
    <property type="entry name" value="AA_kinase"/>
    <property type="match status" value="1"/>
</dbReference>
<dbReference type="PIRSF" id="PIRSF005650">
    <property type="entry name" value="Uridylate_kin"/>
    <property type="match status" value="1"/>
</dbReference>
<dbReference type="SUPFAM" id="SSF53633">
    <property type="entry name" value="Carbamate kinase-like"/>
    <property type="match status" value="1"/>
</dbReference>
<comment type="function">
    <text evidence="1">Catalyzes the reversible phosphorylation of UMP to UDP.</text>
</comment>
<comment type="catalytic activity">
    <reaction evidence="1">
        <text>UMP + ATP = UDP + ADP</text>
        <dbReference type="Rhea" id="RHEA:24400"/>
        <dbReference type="ChEBI" id="CHEBI:30616"/>
        <dbReference type="ChEBI" id="CHEBI:57865"/>
        <dbReference type="ChEBI" id="CHEBI:58223"/>
        <dbReference type="ChEBI" id="CHEBI:456216"/>
        <dbReference type="EC" id="2.7.4.22"/>
    </reaction>
</comment>
<comment type="activity regulation">
    <text evidence="1">Inhibited by UTP.</text>
</comment>
<comment type="pathway">
    <text evidence="1">Pyrimidine metabolism; CTP biosynthesis via de novo pathway; UDP from UMP (UMPK route): step 1/1.</text>
</comment>
<comment type="subunit">
    <text evidence="1">Homohexamer.</text>
</comment>
<comment type="subcellular location">
    <subcellularLocation>
        <location evidence="1">Cytoplasm</location>
    </subcellularLocation>
</comment>
<comment type="similarity">
    <text evidence="1">Belongs to the UMP kinase family.</text>
</comment>
<gene>
    <name evidence="1" type="primary">pyrH</name>
    <name type="ordered locus">Rfer_1991</name>
</gene>
<proteinExistence type="inferred from homology"/>
<reference key="1">
    <citation type="submission" date="2006-02" db="EMBL/GenBank/DDBJ databases">
        <title>Complete sequence of chromosome of Rhodoferax ferrireducens DSM 15236.</title>
        <authorList>
            <person name="Copeland A."/>
            <person name="Lucas S."/>
            <person name="Lapidus A."/>
            <person name="Barry K."/>
            <person name="Detter J.C."/>
            <person name="Glavina del Rio T."/>
            <person name="Hammon N."/>
            <person name="Israni S."/>
            <person name="Pitluck S."/>
            <person name="Brettin T."/>
            <person name="Bruce D."/>
            <person name="Han C."/>
            <person name="Tapia R."/>
            <person name="Gilna P."/>
            <person name="Kiss H."/>
            <person name="Schmutz J."/>
            <person name="Larimer F."/>
            <person name="Land M."/>
            <person name="Kyrpides N."/>
            <person name="Ivanova N."/>
            <person name="Richardson P."/>
        </authorList>
    </citation>
    <scope>NUCLEOTIDE SEQUENCE [LARGE SCALE GENOMIC DNA]</scope>
    <source>
        <strain>ATCC BAA-621 / DSM 15236 / T118</strain>
    </source>
</reference>
<organism>
    <name type="scientific">Albidiferax ferrireducens (strain ATCC BAA-621 / DSM 15236 / T118)</name>
    <name type="common">Rhodoferax ferrireducens</name>
    <dbReference type="NCBI Taxonomy" id="338969"/>
    <lineage>
        <taxon>Bacteria</taxon>
        <taxon>Pseudomonadati</taxon>
        <taxon>Pseudomonadota</taxon>
        <taxon>Betaproteobacteria</taxon>
        <taxon>Burkholderiales</taxon>
        <taxon>Comamonadaceae</taxon>
        <taxon>Rhodoferax</taxon>
    </lineage>
</organism>
<accession>Q21WY7</accession>
<sequence length="240" mass="25511">MSVAKPAHKRILLKLSGEALMGDDQFGINHDTIVRMVDEIAEVTRLGVEVAVVIGGGNIFRGVAGGSVGMDRATADYMGMLATVMNALALGDTMNKAGLTARVMSAIAIEQVVEPYVRPKALQYLEEGKVVIFAAGTGNPFFTTDTAAALRGAEIGAEVVLKATKVDGVYTADPKKDPQATRYSKISFDDAMTQNLGIMDATAFALCRDQKLPIKVFSILKHGALKRVVMGQDEGTLVYA</sequence>